<evidence type="ECO:0000255" key="1">
    <source>
        <dbReference type="HAMAP-Rule" id="MF_00154"/>
    </source>
</evidence>
<proteinExistence type="inferred from homology"/>
<accession>Q0HDK5</accession>
<dbReference type="EC" id="2.5.1.141" evidence="1"/>
<dbReference type="EMBL" id="CP000446">
    <property type="protein sequence ID" value="ABI40862.1"/>
    <property type="molecule type" value="Genomic_DNA"/>
</dbReference>
<dbReference type="RefSeq" id="WP_011624520.1">
    <property type="nucleotide sequence ID" value="NC_008321.1"/>
</dbReference>
<dbReference type="SMR" id="Q0HDK5"/>
<dbReference type="KEGG" id="she:Shewmr4_3799"/>
<dbReference type="HOGENOM" id="CLU_029631_0_2_6"/>
<dbReference type="UniPathway" id="UPA00834">
    <property type="reaction ID" value="UER00712"/>
</dbReference>
<dbReference type="GO" id="GO:0005886">
    <property type="term" value="C:plasma membrane"/>
    <property type="evidence" value="ECO:0007669"/>
    <property type="project" value="UniProtKB-SubCell"/>
</dbReference>
<dbReference type="GO" id="GO:0008495">
    <property type="term" value="F:protoheme IX farnesyltransferase activity"/>
    <property type="evidence" value="ECO:0007669"/>
    <property type="project" value="UniProtKB-UniRule"/>
</dbReference>
<dbReference type="GO" id="GO:0048034">
    <property type="term" value="P:heme O biosynthetic process"/>
    <property type="evidence" value="ECO:0007669"/>
    <property type="project" value="UniProtKB-UniRule"/>
</dbReference>
<dbReference type="CDD" id="cd13957">
    <property type="entry name" value="PT_UbiA_Cox10"/>
    <property type="match status" value="1"/>
</dbReference>
<dbReference type="FunFam" id="1.10.357.140:FF:000001">
    <property type="entry name" value="Protoheme IX farnesyltransferase"/>
    <property type="match status" value="1"/>
</dbReference>
<dbReference type="Gene3D" id="1.10.357.140">
    <property type="entry name" value="UbiA prenyltransferase"/>
    <property type="match status" value="1"/>
</dbReference>
<dbReference type="HAMAP" id="MF_00154">
    <property type="entry name" value="CyoE_CtaB"/>
    <property type="match status" value="1"/>
</dbReference>
<dbReference type="InterPro" id="IPR006369">
    <property type="entry name" value="Protohaem_IX_farnesylTrfase"/>
</dbReference>
<dbReference type="InterPro" id="IPR000537">
    <property type="entry name" value="UbiA_prenyltransferase"/>
</dbReference>
<dbReference type="InterPro" id="IPR030470">
    <property type="entry name" value="UbiA_prenylTrfase_CS"/>
</dbReference>
<dbReference type="InterPro" id="IPR044878">
    <property type="entry name" value="UbiA_sf"/>
</dbReference>
<dbReference type="NCBIfam" id="TIGR01473">
    <property type="entry name" value="cyoE_ctaB"/>
    <property type="match status" value="1"/>
</dbReference>
<dbReference type="NCBIfam" id="NF003349">
    <property type="entry name" value="PRK04375.1-2"/>
    <property type="match status" value="1"/>
</dbReference>
<dbReference type="PANTHER" id="PTHR43448:SF7">
    <property type="entry name" value="4-HYDROXYBENZOATE SOLANESYLTRANSFERASE"/>
    <property type="match status" value="1"/>
</dbReference>
<dbReference type="PANTHER" id="PTHR43448">
    <property type="entry name" value="PROTOHEME IX FARNESYLTRANSFERASE, MITOCHONDRIAL"/>
    <property type="match status" value="1"/>
</dbReference>
<dbReference type="Pfam" id="PF01040">
    <property type="entry name" value="UbiA"/>
    <property type="match status" value="1"/>
</dbReference>
<dbReference type="PROSITE" id="PS00943">
    <property type="entry name" value="UBIA"/>
    <property type="match status" value="1"/>
</dbReference>
<comment type="function">
    <text evidence="1">Converts heme B (protoheme IX) to heme O by substitution of the vinyl group on carbon 2 of heme B porphyrin ring with a hydroxyethyl farnesyl side group.</text>
</comment>
<comment type="catalytic activity">
    <reaction evidence="1">
        <text>heme b + (2E,6E)-farnesyl diphosphate + H2O = Fe(II)-heme o + diphosphate</text>
        <dbReference type="Rhea" id="RHEA:28070"/>
        <dbReference type="ChEBI" id="CHEBI:15377"/>
        <dbReference type="ChEBI" id="CHEBI:33019"/>
        <dbReference type="ChEBI" id="CHEBI:60344"/>
        <dbReference type="ChEBI" id="CHEBI:60530"/>
        <dbReference type="ChEBI" id="CHEBI:175763"/>
        <dbReference type="EC" id="2.5.1.141"/>
    </reaction>
</comment>
<comment type="pathway">
    <text evidence="1">Porphyrin-containing compound metabolism; heme O biosynthesis; heme O from protoheme: step 1/1.</text>
</comment>
<comment type="subcellular location">
    <subcellularLocation>
        <location evidence="1">Cell inner membrane</location>
        <topology evidence="1">Multi-pass membrane protein</topology>
    </subcellularLocation>
</comment>
<comment type="miscellaneous">
    <text evidence="1">Carbon 2 of the heme B porphyrin ring is defined according to the Fischer nomenclature.</text>
</comment>
<comment type="similarity">
    <text evidence="1">Belongs to the UbiA prenyltransferase family. Protoheme IX farnesyltransferase subfamily.</text>
</comment>
<gene>
    <name evidence="1" type="primary">cyoE1</name>
    <name type="ordered locus">Shewmr4_3799</name>
</gene>
<feature type="chain" id="PRO_5000130310" description="Protoheme IX farnesyltransferase 1">
    <location>
        <begin position="1"/>
        <end position="300"/>
    </location>
</feature>
<feature type="transmembrane region" description="Helical" evidence="1">
    <location>
        <begin position="28"/>
        <end position="48"/>
    </location>
</feature>
<feature type="transmembrane region" description="Helical" evidence="1">
    <location>
        <begin position="54"/>
        <end position="74"/>
    </location>
</feature>
<feature type="transmembrane region" description="Helical" evidence="1">
    <location>
        <begin position="100"/>
        <end position="120"/>
    </location>
</feature>
<feature type="transmembrane region" description="Helical" evidence="1">
    <location>
        <begin position="122"/>
        <end position="142"/>
    </location>
</feature>
<feature type="transmembrane region" description="Helical" evidence="1">
    <location>
        <begin position="149"/>
        <end position="169"/>
    </location>
</feature>
<feature type="transmembrane region" description="Helical" evidence="1">
    <location>
        <begin position="176"/>
        <end position="196"/>
    </location>
</feature>
<feature type="transmembrane region" description="Helical" evidence="1">
    <location>
        <begin position="222"/>
        <end position="242"/>
    </location>
</feature>
<feature type="transmembrane region" description="Helical" evidence="1">
    <location>
        <begin position="243"/>
        <end position="263"/>
    </location>
</feature>
<feature type="transmembrane region" description="Helical" evidence="1">
    <location>
        <begin position="280"/>
        <end position="300"/>
    </location>
</feature>
<reference key="1">
    <citation type="submission" date="2006-08" db="EMBL/GenBank/DDBJ databases">
        <title>Complete sequence of Shewanella sp. MR-4.</title>
        <authorList>
            <consortium name="US DOE Joint Genome Institute"/>
            <person name="Copeland A."/>
            <person name="Lucas S."/>
            <person name="Lapidus A."/>
            <person name="Barry K."/>
            <person name="Detter J.C."/>
            <person name="Glavina del Rio T."/>
            <person name="Hammon N."/>
            <person name="Israni S."/>
            <person name="Dalin E."/>
            <person name="Tice H."/>
            <person name="Pitluck S."/>
            <person name="Kiss H."/>
            <person name="Brettin T."/>
            <person name="Bruce D."/>
            <person name="Han C."/>
            <person name="Tapia R."/>
            <person name="Gilna P."/>
            <person name="Schmutz J."/>
            <person name="Larimer F."/>
            <person name="Land M."/>
            <person name="Hauser L."/>
            <person name="Kyrpides N."/>
            <person name="Mikhailova N."/>
            <person name="Nealson K."/>
            <person name="Konstantinidis K."/>
            <person name="Klappenbach J."/>
            <person name="Tiedje J."/>
            <person name="Richardson P."/>
        </authorList>
    </citation>
    <scope>NUCLEOTIDE SEQUENCE [LARGE SCALE GENOMIC DNA]</scope>
    <source>
        <strain>MR-4</strain>
    </source>
</reference>
<sequence length="300" mass="33215">MAKPLSISSHPSVHLAWRAYFEMTKPKVVALMLLTVLVGMCLAMPTILPVKPLVAGLLGIAMMAGSAAALNHLIDRRIDGMMARTYNRPLPKGRVSARRALLFAALLGSLGFVILYVFTNPLTAWLTFASLIGYALIYTAYLKRATPQNIVIGGLAGAMPPLLGWTAVTNQFHGHALLLVIIIFLWTPPHFWALAIHRRAEYAKVDIPMLPVTHGVEFTKTCILLYTILLAIACLLPVLVGMSGPLYFVCSSLLSTGFIYKAWQLKYQDSEGLAMQVFRFSIYHLMLLFMALLLDHYLWA</sequence>
<protein>
    <recommendedName>
        <fullName evidence="1">Protoheme IX farnesyltransferase 1</fullName>
        <ecNumber evidence="1">2.5.1.141</ecNumber>
    </recommendedName>
    <alternativeName>
        <fullName evidence="1">Heme B farnesyltransferase 1</fullName>
    </alternativeName>
    <alternativeName>
        <fullName evidence="1">Heme O synthase 1</fullName>
    </alternativeName>
</protein>
<organism>
    <name type="scientific">Shewanella sp. (strain MR-4)</name>
    <dbReference type="NCBI Taxonomy" id="60480"/>
    <lineage>
        <taxon>Bacteria</taxon>
        <taxon>Pseudomonadati</taxon>
        <taxon>Pseudomonadota</taxon>
        <taxon>Gammaproteobacteria</taxon>
        <taxon>Alteromonadales</taxon>
        <taxon>Shewanellaceae</taxon>
        <taxon>Shewanella</taxon>
    </lineage>
</organism>
<name>CYOE1_SHESM</name>
<keyword id="KW-0997">Cell inner membrane</keyword>
<keyword id="KW-1003">Cell membrane</keyword>
<keyword id="KW-0350">Heme biosynthesis</keyword>
<keyword id="KW-0472">Membrane</keyword>
<keyword id="KW-0808">Transferase</keyword>
<keyword id="KW-0812">Transmembrane</keyword>
<keyword id="KW-1133">Transmembrane helix</keyword>